<comment type="function">
    <text evidence="1">Component of the NuA4 histone acetyltransferase complex which is involved in transcriptional activation of selected genes principally by acetylation of nucleosomal histone H4 and H2A. The NuA4 complex is also involved in DNA repair (By similarity).</text>
</comment>
<comment type="subunit">
    <text evidence="1">Component of the NuA4 histone acetyltransferase complex.</text>
</comment>
<comment type="subcellular location">
    <subcellularLocation>
        <location evidence="3 4">Nucleus</location>
    </subcellularLocation>
</comment>
<comment type="similarity">
    <text evidence="6">Belongs to the EAF7 family.</text>
</comment>
<proteinExistence type="evidence at protein level"/>
<accession>O42924</accession>
<accession>Q9USF9</accession>
<feature type="chain" id="PRO_0000310359" description="Probable chromatin modification-related protein eaf7">
    <location>
        <begin position="1"/>
        <end position="272"/>
    </location>
</feature>
<feature type="region of interest" description="Disordered" evidence="2">
    <location>
        <begin position="1"/>
        <end position="28"/>
    </location>
</feature>
<feature type="region of interest" description="Disordered" evidence="2">
    <location>
        <begin position="131"/>
        <end position="272"/>
    </location>
</feature>
<feature type="compositionally biased region" description="Polar residues" evidence="2">
    <location>
        <begin position="1"/>
        <end position="12"/>
    </location>
</feature>
<feature type="compositionally biased region" description="Basic and acidic residues" evidence="2">
    <location>
        <begin position="13"/>
        <end position="22"/>
    </location>
</feature>
<feature type="compositionally biased region" description="Basic and acidic residues" evidence="2">
    <location>
        <begin position="131"/>
        <end position="182"/>
    </location>
</feature>
<feature type="compositionally biased region" description="Low complexity" evidence="2">
    <location>
        <begin position="184"/>
        <end position="193"/>
    </location>
</feature>
<feature type="compositionally biased region" description="Polar residues" evidence="2">
    <location>
        <begin position="194"/>
        <end position="203"/>
    </location>
</feature>
<feature type="compositionally biased region" description="Basic and acidic residues" evidence="2">
    <location>
        <begin position="209"/>
        <end position="220"/>
    </location>
</feature>
<feature type="compositionally biased region" description="Polar residues" evidence="2">
    <location>
        <begin position="229"/>
        <end position="238"/>
    </location>
</feature>
<feature type="compositionally biased region" description="Basic residues" evidence="2">
    <location>
        <begin position="263"/>
        <end position="272"/>
    </location>
</feature>
<feature type="modified residue" description="Phosphoserine" evidence="5">
    <location>
        <position position="193"/>
    </location>
</feature>
<feature type="modified residue" description="Phosphoserine" evidence="5">
    <location>
        <position position="201"/>
    </location>
</feature>
<name>EAF7_SCHPO</name>
<sequence length="272" mass="30901">MSSRGTRSSTAAEQKRQEDVNKESNMNDSVTEWSVLEETLLLKAICRGLRPVGIEKNFYMIGILREIRDGCKRSTIKAQDVWNKLGTLYNLKEFEELEAPGNEEVKAKEKRIKSPDVKDFKLPKDILKVKEKSEKPLETSQKVEIETVETKPGEPEVKQETNLQKEKKESKVKLESKEEKISRNLRSSSRSISPVTEQPQSPKIQPVIPEKKEKSEKKESSMTLRKRSVSPSSQNTARSPKRMATEPIEPASSPAASNQAIRRSSRSRRPPT</sequence>
<organism>
    <name type="scientific">Schizosaccharomyces pombe (strain 972 / ATCC 24843)</name>
    <name type="common">Fission yeast</name>
    <dbReference type="NCBI Taxonomy" id="284812"/>
    <lineage>
        <taxon>Eukaryota</taxon>
        <taxon>Fungi</taxon>
        <taxon>Dikarya</taxon>
        <taxon>Ascomycota</taxon>
        <taxon>Taphrinomycotina</taxon>
        <taxon>Schizosaccharomycetes</taxon>
        <taxon>Schizosaccharomycetales</taxon>
        <taxon>Schizosaccharomycetaceae</taxon>
        <taxon>Schizosaccharomyces</taxon>
    </lineage>
</organism>
<gene>
    <name type="primary">eaf7</name>
    <name type="ORF">SPBC16A3.19</name>
</gene>
<dbReference type="EMBL" id="CU329671">
    <property type="protein sequence ID" value="CAA16870.1"/>
    <property type="molecule type" value="Genomic_DNA"/>
</dbReference>
<dbReference type="EMBL" id="AB027781">
    <property type="protein sequence ID" value="BAA87085.1"/>
    <property type="molecule type" value="Genomic_DNA"/>
</dbReference>
<dbReference type="PIR" id="T39533">
    <property type="entry name" value="T39533"/>
</dbReference>
<dbReference type="RefSeq" id="NP_596770.1">
    <property type="nucleotide sequence ID" value="NM_001023791.2"/>
</dbReference>
<dbReference type="BioGRID" id="276533">
    <property type="interactions" value="6"/>
</dbReference>
<dbReference type="FunCoup" id="O42924">
    <property type="interactions" value="19"/>
</dbReference>
<dbReference type="IntAct" id="O42924">
    <property type="interactions" value="1"/>
</dbReference>
<dbReference type="MINT" id="O42924"/>
<dbReference type="STRING" id="284812.O42924"/>
<dbReference type="iPTMnet" id="O42924"/>
<dbReference type="PaxDb" id="4896-SPBC16A3.19.1"/>
<dbReference type="EnsemblFungi" id="SPBC16A3.19.1">
    <property type="protein sequence ID" value="SPBC16A3.19.1:pep"/>
    <property type="gene ID" value="SPBC16A3.19"/>
</dbReference>
<dbReference type="GeneID" id="2539989"/>
<dbReference type="KEGG" id="spo:2539989"/>
<dbReference type="PomBase" id="SPBC16A3.19">
    <property type="gene designation" value="eaf7"/>
</dbReference>
<dbReference type="VEuPathDB" id="FungiDB:SPBC16A3.19"/>
<dbReference type="eggNOG" id="KOG4051">
    <property type="taxonomic scope" value="Eukaryota"/>
</dbReference>
<dbReference type="HOGENOM" id="CLU_1023627_0_0_1"/>
<dbReference type="InParanoid" id="O42924"/>
<dbReference type="PRO" id="PR:O42924"/>
<dbReference type="Proteomes" id="UP000002485">
    <property type="component" value="Chromosome II"/>
</dbReference>
<dbReference type="GO" id="GO:0035267">
    <property type="term" value="C:NuA4 histone acetyltransferase complex"/>
    <property type="evidence" value="ECO:0000314"/>
    <property type="project" value="PomBase"/>
</dbReference>
<dbReference type="GO" id="GO:0005634">
    <property type="term" value="C:nucleus"/>
    <property type="evidence" value="ECO:0007005"/>
    <property type="project" value="PomBase"/>
</dbReference>
<dbReference type="GO" id="GO:0006281">
    <property type="term" value="P:DNA repair"/>
    <property type="evidence" value="ECO:0007669"/>
    <property type="project" value="UniProtKB-KW"/>
</dbReference>
<dbReference type="GO" id="GO:0140861">
    <property type="term" value="P:DNA repair-dependent chromatin remodeling"/>
    <property type="evidence" value="ECO:0000305"/>
    <property type="project" value="PomBase"/>
</dbReference>
<dbReference type="GO" id="GO:0006357">
    <property type="term" value="P:regulation of transcription by RNA polymerase II"/>
    <property type="evidence" value="ECO:0000318"/>
    <property type="project" value="GO_Central"/>
</dbReference>
<dbReference type="InterPro" id="IPR012423">
    <property type="entry name" value="Eaf7/MRGBP"/>
</dbReference>
<dbReference type="PANTHER" id="PTHR13581">
    <property type="entry name" value="MRG-BINDING PROTEIN"/>
    <property type="match status" value="1"/>
</dbReference>
<dbReference type="PANTHER" id="PTHR13581:SF5">
    <property type="entry name" value="MRG_MORF4L-BINDING PROTEIN"/>
    <property type="match status" value="1"/>
</dbReference>
<dbReference type="Pfam" id="PF07904">
    <property type="entry name" value="Eaf7"/>
    <property type="match status" value="1"/>
</dbReference>
<evidence type="ECO:0000250" key="1"/>
<evidence type="ECO:0000256" key="2">
    <source>
        <dbReference type="SAM" id="MobiDB-lite"/>
    </source>
</evidence>
<evidence type="ECO:0000269" key="3">
    <source>
    </source>
</evidence>
<evidence type="ECO:0000269" key="4">
    <source>
    </source>
</evidence>
<evidence type="ECO:0000269" key="5">
    <source>
    </source>
</evidence>
<evidence type="ECO:0000305" key="6"/>
<protein>
    <recommendedName>
        <fullName>Probable chromatin modification-related protein eaf7</fullName>
    </recommendedName>
</protein>
<keyword id="KW-0156">Chromatin regulator</keyword>
<keyword id="KW-0227">DNA damage</keyword>
<keyword id="KW-0234">DNA repair</keyword>
<keyword id="KW-0539">Nucleus</keyword>
<keyword id="KW-0597">Phosphoprotein</keyword>
<keyword id="KW-1185">Reference proteome</keyword>
<keyword id="KW-0804">Transcription</keyword>
<keyword id="KW-0805">Transcription regulation</keyword>
<reference key="1">
    <citation type="journal article" date="2002" name="Nature">
        <title>The genome sequence of Schizosaccharomyces pombe.</title>
        <authorList>
            <person name="Wood V."/>
            <person name="Gwilliam R."/>
            <person name="Rajandream M.A."/>
            <person name="Lyne M.H."/>
            <person name="Lyne R."/>
            <person name="Stewart A."/>
            <person name="Sgouros J.G."/>
            <person name="Peat N."/>
            <person name="Hayles J."/>
            <person name="Baker S.G."/>
            <person name="Basham D."/>
            <person name="Bowman S."/>
            <person name="Brooks K."/>
            <person name="Brown D."/>
            <person name="Brown S."/>
            <person name="Chillingworth T."/>
            <person name="Churcher C.M."/>
            <person name="Collins M."/>
            <person name="Connor R."/>
            <person name="Cronin A."/>
            <person name="Davis P."/>
            <person name="Feltwell T."/>
            <person name="Fraser A."/>
            <person name="Gentles S."/>
            <person name="Goble A."/>
            <person name="Hamlin N."/>
            <person name="Harris D.E."/>
            <person name="Hidalgo J."/>
            <person name="Hodgson G."/>
            <person name="Holroyd S."/>
            <person name="Hornsby T."/>
            <person name="Howarth S."/>
            <person name="Huckle E.J."/>
            <person name="Hunt S."/>
            <person name="Jagels K."/>
            <person name="James K.D."/>
            <person name="Jones L."/>
            <person name="Jones M."/>
            <person name="Leather S."/>
            <person name="McDonald S."/>
            <person name="McLean J."/>
            <person name="Mooney P."/>
            <person name="Moule S."/>
            <person name="Mungall K.L."/>
            <person name="Murphy L.D."/>
            <person name="Niblett D."/>
            <person name="Odell C."/>
            <person name="Oliver K."/>
            <person name="O'Neil S."/>
            <person name="Pearson D."/>
            <person name="Quail M.A."/>
            <person name="Rabbinowitsch E."/>
            <person name="Rutherford K.M."/>
            <person name="Rutter S."/>
            <person name="Saunders D."/>
            <person name="Seeger K."/>
            <person name="Sharp S."/>
            <person name="Skelton J."/>
            <person name="Simmonds M.N."/>
            <person name="Squares R."/>
            <person name="Squares S."/>
            <person name="Stevens K."/>
            <person name="Taylor K."/>
            <person name="Taylor R.G."/>
            <person name="Tivey A."/>
            <person name="Walsh S.V."/>
            <person name="Warren T."/>
            <person name="Whitehead S."/>
            <person name="Woodward J.R."/>
            <person name="Volckaert G."/>
            <person name="Aert R."/>
            <person name="Robben J."/>
            <person name="Grymonprez B."/>
            <person name="Weltjens I."/>
            <person name="Vanstreels E."/>
            <person name="Rieger M."/>
            <person name="Schaefer M."/>
            <person name="Mueller-Auer S."/>
            <person name="Gabel C."/>
            <person name="Fuchs M."/>
            <person name="Duesterhoeft A."/>
            <person name="Fritzc C."/>
            <person name="Holzer E."/>
            <person name="Moestl D."/>
            <person name="Hilbert H."/>
            <person name="Borzym K."/>
            <person name="Langer I."/>
            <person name="Beck A."/>
            <person name="Lehrach H."/>
            <person name="Reinhardt R."/>
            <person name="Pohl T.M."/>
            <person name="Eger P."/>
            <person name="Zimmermann W."/>
            <person name="Wedler H."/>
            <person name="Wambutt R."/>
            <person name="Purnelle B."/>
            <person name="Goffeau A."/>
            <person name="Cadieu E."/>
            <person name="Dreano S."/>
            <person name="Gloux S."/>
            <person name="Lelaure V."/>
            <person name="Mottier S."/>
            <person name="Galibert F."/>
            <person name="Aves S.J."/>
            <person name="Xiang Z."/>
            <person name="Hunt C."/>
            <person name="Moore K."/>
            <person name="Hurst S.M."/>
            <person name="Lucas M."/>
            <person name="Rochet M."/>
            <person name="Gaillardin C."/>
            <person name="Tallada V.A."/>
            <person name="Garzon A."/>
            <person name="Thode G."/>
            <person name="Daga R.R."/>
            <person name="Cruzado L."/>
            <person name="Jimenez J."/>
            <person name="Sanchez M."/>
            <person name="del Rey F."/>
            <person name="Benito J."/>
            <person name="Dominguez A."/>
            <person name="Revuelta J.L."/>
            <person name="Moreno S."/>
            <person name="Armstrong J."/>
            <person name="Forsburg S.L."/>
            <person name="Cerutti L."/>
            <person name="Lowe T."/>
            <person name="McCombie W.R."/>
            <person name="Paulsen I."/>
            <person name="Potashkin J."/>
            <person name="Shpakovski G.V."/>
            <person name="Ussery D."/>
            <person name="Barrell B.G."/>
            <person name="Nurse P."/>
        </authorList>
    </citation>
    <scope>NUCLEOTIDE SEQUENCE [LARGE SCALE GENOMIC DNA]</scope>
    <source>
        <strain>972 / ATCC 24843</strain>
    </source>
</reference>
<reference key="2">
    <citation type="journal article" date="2000" name="Genes Cells">
        <title>Large-scale screening of intracellular protein localization in living fission yeast cells by the use of a GFP-fusion genomic DNA library.</title>
        <authorList>
            <person name="Ding D.-Q."/>
            <person name="Tomita Y."/>
            <person name="Yamamoto A."/>
            <person name="Chikashige Y."/>
            <person name="Haraguchi T."/>
            <person name="Hiraoka Y."/>
        </authorList>
    </citation>
    <scope>NUCLEOTIDE SEQUENCE [LARGE SCALE GENOMIC DNA] OF 98-187</scope>
    <scope>SUBCELLULAR LOCATION</scope>
    <source>
        <strain>ATCC 38364 / 968</strain>
    </source>
</reference>
<reference key="3">
    <citation type="journal article" date="2006" name="Nat. Biotechnol.">
        <title>ORFeome cloning and global analysis of protein localization in the fission yeast Schizosaccharomyces pombe.</title>
        <authorList>
            <person name="Matsuyama A."/>
            <person name="Arai R."/>
            <person name="Yashiroda Y."/>
            <person name="Shirai A."/>
            <person name="Kamata A."/>
            <person name="Sekido S."/>
            <person name="Kobayashi Y."/>
            <person name="Hashimoto A."/>
            <person name="Hamamoto M."/>
            <person name="Hiraoka Y."/>
            <person name="Horinouchi S."/>
            <person name="Yoshida M."/>
        </authorList>
    </citation>
    <scope>SUBCELLULAR LOCATION [LARGE SCALE ANALYSIS]</scope>
</reference>
<reference key="4">
    <citation type="journal article" date="2008" name="J. Proteome Res.">
        <title>Phosphoproteome analysis of fission yeast.</title>
        <authorList>
            <person name="Wilson-Grady J.T."/>
            <person name="Villen J."/>
            <person name="Gygi S.P."/>
        </authorList>
    </citation>
    <scope>PHOSPHORYLATION [LARGE SCALE ANALYSIS] AT SER-193 AND SER-201</scope>
    <scope>IDENTIFICATION BY MASS SPECTROMETRY</scope>
</reference>